<protein>
    <recommendedName>
        <fullName>Centromere protein mis12</fullName>
    </recommendedName>
    <alternativeName>
        <fullName>NMS complex subunit mis12</fullName>
    </alternativeName>
</protein>
<feature type="chain" id="PRO_0000096492" description="Centromere protein mis12">
    <location>
        <begin position="1"/>
        <end position="259"/>
    </location>
</feature>
<feature type="coiled-coil region" evidence="1">
    <location>
        <begin position="123"/>
        <end position="156"/>
    </location>
</feature>
<feature type="modified residue" description="Phosphoserine" evidence="3">
    <location>
        <position position="190"/>
    </location>
</feature>
<feature type="modified residue" description="Phosphothreonine" evidence="3">
    <location>
        <position position="192"/>
    </location>
</feature>
<feature type="modified residue" description="Phosphoserine" evidence="3">
    <location>
        <position position="213"/>
    </location>
</feature>
<feature type="helix" evidence="8">
    <location>
        <begin position="3"/>
        <end position="7"/>
    </location>
</feature>
<feature type="helix" evidence="8">
    <location>
        <begin position="9"/>
        <end position="36"/>
    </location>
</feature>
<feature type="helix" evidence="8">
    <location>
        <begin position="41"/>
        <end position="44"/>
    </location>
</feature>
<feature type="helix" evidence="8">
    <location>
        <begin position="46"/>
        <end position="77"/>
    </location>
</feature>
<feature type="helix" evidence="8">
    <location>
        <begin position="84"/>
        <end position="89"/>
    </location>
</feature>
<feature type="turn" evidence="8">
    <location>
        <begin position="95"/>
        <end position="98"/>
    </location>
</feature>
<feature type="helix" evidence="8">
    <location>
        <begin position="103"/>
        <end position="155"/>
    </location>
</feature>
<feature type="helix" evidence="8">
    <location>
        <begin position="166"/>
        <end position="187"/>
    </location>
</feature>
<feature type="helix" evidence="8">
    <location>
        <begin position="196"/>
        <end position="212"/>
    </location>
</feature>
<dbReference type="EMBL" id="AB027472">
    <property type="protein sequence ID" value="BAA77791.1"/>
    <property type="molecule type" value="Genomic_DNA"/>
</dbReference>
<dbReference type="EMBL" id="CU329671">
    <property type="protein sequence ID" value="CAB52606.1"/>
    <property type="molecule type" value="Genomic_DNA"/>
</dbReference>
<dbReference type="PIR" id="T40432">
    <property type="entry name" value="T40432"/>
</dbReference>
<dbReference type="RefSeq" id="NP_595454.1">
    <property type="nucleotide sequence ID" value="NM_001021364.2"/>
</dbReference>
<dbReference type="PDB" id="5WWL">
    <property type="method" value="X-ray"/>
    <property type="resolution" value="2.40 A"/>
    <property type="chains" value="M=1-215"/>
</dbReference>
<dbReference type="PDBsum" id="5WWL"/>
<dbReference type="SMR" id="Q9Y738"/>
<dbReference type="BioGRID" id="277022">
    <property type="interactions" value="43"/>
</dbReference>
<dbReference type="FunCoup" id="Q9Y738">
    <property type="interactions" value="5"/>
</dbReference>
<dbReference type="IntAct" id="Q9Y738">
    <property type="interactions" value="3"/>
</dbReference>
<dbReference type="STRING" id="284812.Q9Y738"/>
<dbReference type="iPTMnet" id="Q9Y738"/>
<dbReference type="PaxDb" id="4896-SPBC409.04c.1"/>
<dbReference type="EnsemblFungi" id="SPBC409.04c.1">
    <property type="protein sequence ID" value="SPBC409.04c.1:pep"/>
    <property type="gene ID" value="SPBC409.04c"/>
</dbReference>
<dbReference type="GeneID" id="2540494"/>
<dbReference type="KEGG" id="spo:2540494"/>
<dbReference type="PomBase" id="SPBC409.04c">
    <property type="gene designation" value="mis12"/>
</dbReference>
<dbReference type="VEuPathDB" id="FungiDB:SPBC409.04c"/>
<dbReference type="eggNOG" id="ENOG502S72R">
    <property type="taxonomic scope" value="Eukaryota"/>
</dbReference>
<dbReference type="HOGENOM" id="CLU_046437_0_0_1"/>
<dbReference type="InParanoid" id="Q9Y738"/>
<dbReference type="OMA" id="EGLHKFE"/>
<dbReference type="PhylomeDB" id="Q9Y738"/>
<dbReference type="PRO" id="PR:Q9Y738"/>
<dbReference type="Proteomes" id="UP000002485">
    <property type="component" value="Chromosome II"/>
</dbReference>
<dbReference type="GO" id="GO:0034506">
    <property type="term" value="C:chromosome, centromeric core domain"/>
    <property type="evidence" value="ECO:0000314"/>
    <property type="project" value="PomBase"/>
</dbReference>
<dbReference type="GO" id="GO:0000779">
    <property type="term" value="C:condensed chromosome, centromeric region"/>
    <property type="evidence" value="ECO:0000314"/>
    <property type="project" value="PomBase"/>
</dbReference>
<dbReference type="GO" id="GO:0000939">
    <property type="term" value="C:inner kinetochore"/>
    <property type="evidence" value="ECO:0000314"/>
    <property type="project" value="PomBase"/>
</dbReference>
<dbReference type="GO" id="GO:0000776">
    <property type="term" value="C:kinetochore"/>
    <property type="evidence" value="ECO:0000314"/>
    <property type="project" value="PomBase"/>
</dbReference>
<dbReference type="GO" id="GO:0000444">
    <property type="term" value="C:MIS12/MIND type complex"/>
    <property type="evidence" value="ECO:0000314"/>
    <property type="project" value="PomBase"/>
</dbReference>
<dbReference type="GO" id="GO:0005634">
    <property type="term" value="C:nucleus"/>
    <property type="evidence" value="ECO:0007669"/>
    <property type="project" value="InterPro"/>
</dbReference>
<dbReference type="GO" id="GO:0000940">
    <property type="term" value="C:outer kinetochore"/>
    <property type="evidence" value="ECO:0000314"/>
    <property type="project" value="PomBase"/>
</dbReference>
<dbReference type="GO" id="GO:0051315">
    <property type="term" value="P:attachment of mitotic spindle microtubules to kinetochore"/>
    <property type="evidence" value="ECO:0000305"/>
    <property type="project" value="PomBase"/>
</dbReference>
<dbReference type="GO" id="GO:0051301">
    <property type="term" value="P:cell division"/>
    <property type="evidence" value="ECO:0007669"/>
    <property type="project" value="UniProtKB-KW"/>
</dbReference>
<dbReference type="GO" id="GO:0051382">
    <property type="term" value="P:kinetochore assembly"/>
    <property type="evidence" value="ECO:0000318"/>
    <property type="project" value="GO_Central"/>
</dbReference>
<dbReference type="GO" id="GO:0000070">
    <property type="term" value="P:mitotic sister chromatid segregation"/>
    <property type="evidence" value="ECO:0000315"/>
    <property type="project" value="PomBase"/>
</dbReference>
<dbReference type="GO" id="GO:0051455">
    <property type="term" value="P:spindle attachment to meiosis I kinetochore"/>
    <property type="evidence" value="ECO:0000305"/>
    <property type="project" value="PomBase"/>
</dbReference>
<dbReference type="InterPro" id="IPR008685">
    <property type="entry name" value="Centromere_Mis12"/>
</dbReference>
<dbReference type="PANTHER" id="PTHR14527">
    <property type="entry name" value="PROTEIN MIS12 HOMOLOG"/>
    <property type="match status" value="1"/>
</dbReference>
<dbReference type="PANTHER" id="PTHR14527:SF2">
    <property type="entry name" value="PROTEIN MIS12 HOMOLOG"/>
    <property type="match status" value="1"/>
</dbReference>
<dbReference type="Pfam" id="PF05859">
    <property type="entry name" value="Mis12"/>
    <property type="match status" value="1"/>
</dbReference>
<organism>
    <name type="scientific">Schizosaccharomyces pombe (strain 972 / ATCC 24843)</name>
    <name type="common">Fission yeast</name>
    <dbReference type="NCBI Taxonomy" id="284812"/>
    <lineage>
        <taxon>Eukaryota</taxon>
        <taxon>Fungi</taxon>
        <taxon>Dikarya</taxon>
        <taxon>Ascomycota</taxon>
        <taxon>Taphrinomycotina</taxon>
        <taxon>Schizosaccharomycetes</taxon>
        <taxon>Schizosaccharomycetales</taxon>
        <taxon>Schizosaccharomycetaceae</taxon>
        <taxon>Schizosaccharomyces</taxon>
    </lineage>
</organism>
<evidence type="ECO:0000255" key="1"/>
<evidence type="ECO:0000269" key="2">
    <source>
    </source>
</evidence>
<evidence type="ECO:0000269" key="3">
    <source>
    </source>
</evidence>
<evidence type="ECO:0000269" key="4">
    <source>
    </source>
</evidence>
<evidence type="ECO:0000269" key="5">
    <source>
    </source>
</evidence>
<evidence type="ECO:0000269" key="6">
    <source>
    </source>
</evidence>
<evidence type="ECO:0000305" key="7"/>
<evidence type="ECO:0007829" key="8">
    <source>
        <dbReference type="PDB" id="5WWL"/>
    </source>
</evidence>
<name>MIS12_SCHPO</name>
<accession>Q9Y738</accession>
<gene>
    <name type="primary">mis12</name>
    <name type="ORF">SPBC409.04c</name>
</gene>
<comment type="function">
    <text evidence="3">Acts as a component of the NMS (Ndc80-MIND-Spc7) super complex which has a role in kinetochore function during late meiotic prophase and throughout the mitotic cell cycle. Required for correct segregation of chromosomes and for maintaining the inner centromere structure.</text>
</comment>
<comment type="subunit">
    <text evidence="2 3 4 5 6">Component of the NMS super complex which consists of mis12, mis13, mis14, ndc80, nnf1, nuf2, sos7, spc7, spc24 and spc25. Interacts with dis1, mal2, mis14, ppe1 and ekc1.</text>
</comment>
<comment type="interaction">
    <interactant intactId="EBI-1002822">
        <id>Q9Y738</id>
    </interactant>
    <interactant intactId="EBI-1153281">
        <id>Q9Y812</id>
        <label>cnp1</label>
    </interactant>
    <organismsDiffer>false</organismsDiffer>
    <experiments>3</experiments>
</comment>
<comment type="subcellular location">
    <subcellularLocation>
        <location evidence="3">Chromosome</location>
        <location evidence="3">Centromere</location>
    </subcellularLocation>
    <subcellularLocation>
        <location evidence="3">Chromosome</location>
        <location evidence="3">Centromere</location>
        <location evidence="3">Kinetochore</location>
    </subcellularLocation>
</comment>
<comment type="similarity">
    <text evidence="7">Belongs to the mis12 family.</text>
</comment>
<proteinExistence type="evidence at protein level"/>
<keyword id="KW-0002">3D-structure</keyword>
<keyword id="KW-0131">Cell cycle</keyword>
<keyword id="KW-0132">Cell division</keyword>
<keyword id="KW-0137">Centromere</keyword>
<keyword id="KW-0158">Chromosome</keyword>
<keyword id="KW-0175">Coiled coil</keyword>
<keyword id="KW-0995">Kinetochore</keyword>
<keyword id="KW-0469">Meiosis</keyword>
<keyword id="KW-0498">Mitosis</keyword>
<keyword id="KW-0597">Phosphoprotein</keyword>
<keyword id="KW-1185">Reference proteome</keyword>
<sequence>MLVELLEFTPLSFIDDVINITNQLLYKGVNGVDKAFSQTRFAKKAPQEIEEGLHKFEVLFESVVDRYYDGFEVYTLRNIFSYPPELKGYMRTFGKDVDYSITTEQDAAMDQAIQEAAEKLVVKMQLRRDLRMRLSRKREKKTEIEKHLERISFLNKVPENWQVTLPETTDFLLDQLGNLQHAVKRVVEASPTVHSREVDERITYLEKGYERLSNPIDQQKDFWSHHLSKLESTANTETANNIHKLLLSSEKDVGHTDEP</sequence>
<reference key="1">
    <citation type="journal article" date="1999" name="Genes Dev.">
        <title>Proper metaphase spindle length is determined by centromere proteins Mis12 and Mis6 required for faithful chromosome segregation.</title>
        <authorList>
            <person name="Goshima G."/>
            <person name="Saitoh S."/>
            <person name="Yanagida M."/>
        </authorList>
    </citation>
    <scope>NUCLEOTIDE SEQUENCE [GENOMIC DNA]</scope>
    <scope>CHARACTERIZATION</scope>
    <source>
        <strain>972 / ATCC 24843</strain>
    </source>
</reference>
<reference key="2">
    <citation type="journal article" date="2002" name="Nature">
        <title>The genome sequence of Schizosaccharomyces pombe.</title>
        <authorList>
            <person name="Wood V."/>
            <person name="Gwilliam R."/>
            <person name="Rajandream M.A."/>
            <person name="Lyne M.H."/>
            <person name="Lyne R."/>
            <person name="Stewart A."/>
            <person name="Sgouros J.G."/>
            <person name="Peat N."/>
            <person name="Hayles J."/>
            <person name="Baker S.G."/>
            <person name="Basham D."/>
            <person name="Bowman S."/>
            <person name="Brooks K."/>
            <person name="Brown D."/>
            <person name="Brown S."/>
            <person name="Chillingworth T."/>
            <person name="Churcher C.M."/>
            <person name="Collins M."/>
            <person name="Connor R."/>
            <person name="Cronin A."/>
            <person name="Davis P."/>
            <person name="Feltwell T."/>
            <person name="Fraser A."/>
            <person name="Gentles S."/>
            <person name="Goble A."/>
            <person name="Hamlin N."/>
            <person name="Harris D.E."/>
            <person name="Hidalgo J."/>
            <person name="Hodgson G."/>
            <person name="Holroyd S."/>
            <person name="Hornsby T."/>
            <person name="Howarth S."/>
            <person name="Huckle E.J."/>
            <person name="Hunt S."/>
            <person name="Jagels K."/>
            <person name="James K.D."/>
            <person name="Jones L."/>
            <person name="Jones M."/>
            <person name="Leather S."/>
            <person name="McDonald S."/>
            <person name="McLean J."/>
            <person name="Mooney P."/>
            <person name="Moule S."/>
            <person name="Mungall K.L."/>
            <person name="Murphy L.D."/>
            <person name="Niblett D."/>
            <person name="Odell C."/>
            <person name="Oliver K."/>
            <person name="O'Neil S."/>
            <person name="Pearson D."/>
            <person name="Quail M.A."/>
            <person name="Rabbinowitsch E."/>
            <person name="Rutherford K.M."/>
            <person name="Rutter S."/>
            <person name="Saunders D."/>
            <person name="Seeger K."/>
            <person name="Sharp S."/>
            <person name="Skelton J."/>
            <person name="Simmonds M.N."/>
            <person name="Squares R."/>
            <person name="Squares S."/>
            <person name="Stevens K."/>
            <person name="Taylor K."/>
            <person name="Taylor R.G."/>
            <person name="Tivey A."/>
            <person name="Walsh S.V."/>
            <person name="Warren T."/>
            <person name="Whitehead S."/>
            <person name="Woodward J.R."/>
            <person name="Volckaert G."/>
            <person name="Aert R."/>
            <person name="Robben J."/>
            <person name="Grymonprez B."/>
            <person name="Weltjens I."/>
            <person name="Vanstreels E."/>
            <person name="Rieger M."/>
            <person name="Schaefer M."/>
            <person name="Mueller-Auer S."/>
            <person name="Gabel C."/>
            <person name="Fuchs M."/>
            <person name="Duesterhoeft A."/>
            <person name="Fritzc C."/>
            <person name="Holzer E."/>
            <person name="Moestl D."/>
            <person name="Hilbert H."/>
            <person name="Borzym K."/>
            <person name="Langer I."/>
            <person name="Beck A."/>
            <person name="Lehrach H."/>
            <person name="Reinhardt R."/>
            <person name="Pohl T.M."/>
            <person name="Eger P."/>
            <person name="Zimmermann W."/>
            <person name="Wedler H."/>
            <person name="Wambutt R."/>
            <person name="Purnelle B."/>
            <person name="Goffeau A."/>
            <person name="Cadieu E."/>
            <person name="Dreano S."/>
            <person name="Gloux S."/>
            <person name="Lelaure V."/>
            <person name="Mottier S."/>
            <person name="Galibert F."/>
            <person name="Aves S.J."/>
            <person name="Xiang Z."/>
            <person name="Hunt C."/>
            <person name="Moore K."/>
            <person name="Hurst S.M."/>
            <person name="Lucas M."/>
            <person name="Rochet M."/>
            <person name="Gaillardin C."/>
            <person name="Tallada V.A."/>
            <person name="Garzon A."/>
            <person name="Thode G."/>
            <person name="Daga R.R."/>
            <person name="Cruzado L."/>
            <person name="Jimenez J."/>
            <person name="Sanchez M."/>
            <person name="del Rey F."/>
            <person name="Benito J."/>
            <person name="Dominguez A."/>
            <person name="Revuelta J.L."/>
            <person name="Moreno S."/>
            <person name="Armstrong J."/>
            <person name="Forsburg S.L."/>
            <person name="Cerutti L."/>
            <person name="Lowe T."/>
            <person name="McCombie W.R."/>
            <person name="Paulsen I."/>
            <person name="Potashkin J."/>
            <person name="Shpakovski G.V."/>
            <person name="Ussery D."/>
            <person name="Barrell B.G."/>
            <person name="Nurse P."/>
        </authorList>
    </citation>
    <scope>NUCLEOTIDE SEQUENCE [LARGE SCALE GENOMIC DNA]</scope>
    <source>
        <strain>972 / ATCC 24843</strain>
    </source>
</reference>
<reference key="3">
    <citation type="journal article" date="2003" name="EMBO J.">
        <title>The role of Ppe1/PP6 phosphatase for equal chromosome segregation in fission yeast kinetochore.</title>
        <authorList>
            <person name="Goshima G."/>
            <person name="Iwasaki O."/>
            <person name="Obuse C."/>
            <person name="Yanagida M."/>
        </authorList>
    </citation>
    <scope>FUNCTION</scope>
    <scope>SUBUNIT</scope>
    <scope>SUBCELLULAR LOCATION</scope>
    <scope>PHOSPHORYLATION AT SER-190; THR-192 AND SER-213</scope>
</reference>
<reference key="4">
    <citation type="journal article" date="2002" name="Mol. Cell. Biol.">
        <title>The mal2p protein is an essential component of the fission yeast centromere.</title>
        <authorList>
            <person name="Jin Q.-W."/>
            <person name="Pidoux A.L."/>
            <person name="Decker C."/>
            <person name="Allshire R.C."/>
            <person name="Fleig U."/>
        </authorList>
    </citation>
    <scope>INTERACTION WITH MAL2</scope>
</reference>
<reference key="5">
    <citation type="journal article" date="2004" name="Cell">
        <title>Mis16 and Mis18 are required for CENP-A loading and histone deacetylation at centromeres.</title>
        <authorList>
            <person name="Hayashi T."/>
            <person name="Fujita Y."/>
            <person name="Iwasaki O."/>
            <person name="Adachi Y."/>
            <person name="Takahashi K."/>
            <person name="Yanagida M."/>
        </authorList>
    </citation>
    <scope>INTERACTION WITH MIS14</scope>
</reference>
<reference key="6">
    <citation type="journal article" date="2005" name="EMBO J.">
        <title>Molecular analysis of kinetochore architecture in fission yeast.</title>
        <authorList>
            <person name="Liu X."/>
            <person name="McLeod I."/>
            <person name="Anderson S."/>
            <person name="Yates J.R. III"/>
            <person name="He X."/>
        </authorList>
    </citation>
    <scope>IDENTIFICATION IN THE NMS COMPLEX</scope>
</reference>
<reference key="7">
    <citation type="journal article" date="2006" name="Mol. Biol. Cell">
        <title>Reconstruction of the kinetochore during meiosis in fission yeast Schizosaccharomyces pombe.</title>
        <authorList>
            <person name="Hayashi A."/>
            <person name="Asakawa H."/>
            <person name="Haraguchi T."/>
            <person name="Hiraoka Y."/>
        </authorList>
    </citation>
    <scope>IDENTIFICATION IN THE NMS COMPLEX</scope>
</reference>
<reference key="8">
    <citation type="journal article" date="2006" name="Nat. Biotechnol.">
        <title>ORFeome cloning and global analysis of protein localization in the fission yeast Schizosaccharomyces pombe.</title>
        <authorList>
            <person name="Matsuyama A."/>
            <person name="Arai R."/>
            <person name="Yashiroda Y."/>
            <person name="Shirai A."/>
            <person name="Kamata A."/>
            <person name="Sekido S."/>
            <person name="Kobayashi Y."/>
            <person name="Hashimoto A."/>
            <person name="Hamamoto M."/>
            <person name="Hiraoka Y."/>
            <person name="Horinouchi S."/>
            <person name="Yoshida M."/>
        </authorList>
    </citation>
    <scope>SUBCELLULAR LOCATION [LARGE SCALE ANALYSIS]</scope>
</reference>